<gene>
    <name type="primary">MT-ND4</name>
    <name type="synonym">MTND4</name>
    <name type="synonym">NADH4</name>
    <name type="synonym">ND4</name>
</gene>
<comment type="function">
    <text evidence="1">Core subunit of the mitochondrial membrane respiratory chain NADH dehydrogenase (Complex I) which catalyzes electron transfer from NADH through the respiratory chain, using ubiquinone as an electron acceptor. Essential for the catalytic activity and assembly of complex I.</text>
</comment>
<comment type="catalytic activity">
    <reaction evidence="1">
        <text>a ubiquinone + NADH + 5 H(+)(in) = a ubiquinol + NAD(+) + 4 H(+)(out)</text>
        <dbReference type="Rhea" id="RHEA:29091"/>
        <dbReference type="Rhea" id="RHEA-COMP:9565"/>
        <dbReference type="Rhea" id="RHEA-COMP:9566"/>
        <dbReference type="ChEBI" id="CHEBI:15378"/>
        <dbReference type="ChEBI" id="CHEBI:16389"/>
        <dbReference type="ChEBI" id="CHEBI:17976"/>
        <dbReference type="ChEBI" id="CHEBI:57540"/>
        <dbReference type="ChEBI" id="CHEBI:57945"/>
        <dbReference type="EC" id="7.1.1.2"/>
    </reaction>
</comment>
<comment type="subunit">
    <text evidence="2">Core subunit of respiratory chain NADH dehydrogenase (Complex I) which is composed of 45 different subunits.</text>
</comment>
<comment type="subcellular location">
    <subcellularLocation>
        <location evidence="2">Mitochondrion inner membrane</location>
        <topology evidence="3">Multi-pass membrane protein</topology>
    </subcellularLocation>
</comment>
<comment type="similarity">
    <text evidence="4">Belongs to the complex I subunit 4 family.</text>
</comment>
<accession>P92484</accession>
<evidence type="ECO:0000250" key="1">
    <source>
        <dbReference type="UniProtKB" id="P03905"/>
    </source>
</evidence>
<evidence type="ECO:0000250" key="2">
    <source>
        <dbReference type="UniProtKB" id="P03910"/>
    </source>
</evidence>
<evidence type="ECO:0000255" key="3"/>
<evidence type="ECO:0000305" key="4"/>
<keyword id="KW-0249">Electron transport</keyword>
<keyword id="KW-0472">Membrane</keyword>
<keyword id="KW-0496">Mitochondrion</keyword>
<keyword id="KW-0999">Mitochondrion inner membrane</keyword>
<keyword id="KW-0520">NAD</keyword>
<keyword id="KW-1185">Reference proteome</keyword>
<keyword id="KW-0679">Respiratory chain</keyword>
<keyword id="KW-1278">Translocase</keyword>
<keyword id="KW-0812">Transmembrane</keyword>
<keyword id="KW-1133">Transmembrane helix</keyword>
<keyword id="KW-0813">Transport</keyword>
<keyword id="KW-0830">Ubiquinone</keyword>
<dbReference type="EC" id="7.1.1.2" evidence="1"/>
<dbReference type="EMBL" id="X97337">
    <property type="protein sequence ID" value="CAA66023.1"/>
    <property type="molecule type" value="Genomic_DNA"/>
</dbReference>
<dbReference type="PIR" id="T11372">
    <property type="entry name" value="T11372"/>
</dbReference>
<dbReference type="RefSeq" id="NP_007390.1">
    <property type="nucleotide sequence ID" value="NC_001788.1"/>
</dbReference>
<dbReference type="SMR" id="P92484"/>
<dbReference type="GeneID" id="808055"/>
<dbReference type="KEGG" id="eai:808055"/>
<dbReference type="CTD" id="4538"/>
<dbReference type="Proteomes" id="UP000694387">
    <property type="component" value="Mitochondrion MT"/>
</dbReference>
<dbReference type="GO" id="GO:0005743">
    <property type="term" value="C:mitochondrial inner membrane"/>
    <property type="evidence" value="ECO:0000250"/>
    <property type="project" value="UniProtKB"/>
</dbReference>
<dbReference type="GO" id="GO:0008137">
    <property type="term" value="F:NADH dehydrogenase (ubiquinone) activity"/>
    <property type="evidence" value="ECO:0000250"/>
    <property type="project" value="UniProtKB"/>
</dbReference>
<dbReference type="GO" id="GO:0048039">
    <property type="term" value="F:ubiquinone binding"/>
    <property type="evidence" value="ECO:0007669"/>
    <property type="project" value="TreeGrafter"/>
</dbReference>
<dbReference type="GO" id="GO:0015990">
    <property type="term" value="P:electron transport coupled proton transport"/>
    <property type="evidence" value="ECO:0007669"/>
    <property type="project" value="TreeGrafter"/>
</dbReference>
<dbReference type="GO" id="GO:0006120">
    <property type="term" value="P:mitochondrial electron transport, NADH to ubiquinone"/>
    <property type="evidence" value="ECO:0000250"/>
    <property type="project" value="UniProtKB"/>
</dbReference>
<dbReference type="GO" id="GO:0032981">
    <property type="term" value="P:mitochondrial respiratory chain complex I assembly"/>
    <property type="evidence" value="ECO:0000250"/>
    <property type="project" value="UniProtKB"/>
</dbReference>
<dbReference type="InterPro" id="IPR000260">
    <property type="entry name" value="NADH4_N"/>
</dbReference>
<dbReference type="InterPro" id="IPR010227">
    <property type="entry name" value="NADH_Q_OxRdtase_chainM/4"/>
</dbReference>
<dbReference type="InterPro" id="IPR003918">
    <property type="entry name" value="NADH_UbQ_OxRdtase"/>
</dbReference>
<dbReference type="InterPro" id="IPR001750">
    <property type="entry name" value="ND/Mrp_TM"/>
</dbReference>
<dbReference type="NCBIfam" id="TIGR01972">
    <property type="entry name" value="NDH_I_M"/>
    <property type="match status" value="1"/>
</dbReference>
<dbReference type="PANTHER" id="PTHR43507">
    <property type="entry name" value="NADH-UBIQUINONE OXIDOREDUCTASE CHAIN 4"/>
    <property type="match status" value="1"/>
</dbReference>
<dbReference type="PANTHER" id="PTHR43507:SF20">
    <property type="entry name" value="NADH-UBIQUINONE OXIDOREDUCTASE CHAIN 4"/>
    <property type="match status" value="1"/>
</dbReference>
<dbReference type="Pfam" id="PF01059">
    <property type="entry name" value="Oxidored_q5_N"/>
    <property type="match status" value="1"/>
</dbReference>
<dbReference type="Pfam" id="PF00361">
    <property type="entry name" value="Proton_antipo_M"/>
    <property type="match status" value="1"/>
</dbReference>
<dbReference type="PRINTS" id="PR01437">
    <property type="entry name" value="NUOXDRDTASE4"/>
</dbReference>
<organism>
    <name type="scientific">Equus asinus</name>
    <name type="common">Donkey</name>
    <name type="synonym">Equus africanus asinus</name>
    <dbReference type="NCBI Taxonomy" id="9793"/>
    <lineage>
        <taxon>Eukaryota</taxon>
        <taxon>Metazoa</taxon>
        <taxon>Chordata</taxon>
        <taxon>Craniata</taxon>
        <taxon>Vertebrata</taxon>
        <taxon>Euteleostomi</taxon>
        <taxon>Mammalia</taxon>
        <taxon>Eutheria</taxon>
        <taxon>Laurasiatheria</taxon>
        <taxon>Perissodactyla</taxon>
        <taxon>Equidae</taxon>
        <taxon>Equus</taxon>
    </lineage>
</organism>
<proteinExistence type="inferred from homology"/>
<geneLocation type="mitochondrion"/>
<sequence length="459" mass="51803">MLKIIIPTIMLMPLTWLSKKNMIWINTTTYSLLISLISLSLLNQPNNNSLNFSLMFFSDPLSAPLLVLTTWLLPLMLMASQHHLSKEPLIRKKLYITMLAMLQTFLIMTFTATELISFYILFEATLVPTLIIITRWGNQTERLNAGLYFLFYTLVGSLPLLVALISIQNLTGSLNFLLIQYWNQALPDSWSNIFLWLACMMAFMVKMPLYGLRLWLPKAHVEAPIAGSMVLAAILLKLGGYGMLRITMMLNPQTNFMAYPFLMLSLWGMIMTSSICLRQTDLKSLIAYSSVSHMALVIVAVLIQTPWSYMGATALMIAHGLTSSMLFCLANSNYERTHSRTMILARGLQTLLPLMAAWWLLASLTNLALPPSINLIGELFVVMSSFSWSNITIILMGANITITALYSLYMLITTQRGKYTHHINSIKPSFTRENALMALHMTPLLLLSLNPKIILGFTY</sequence>
<name>NU4M_EQUAS</name>
<reference key="1">
    <citation type="journal article" date="1996" name="J. Mol. Evol.">
        <title>The complete mitochondrial DNA (mtDNA) of the donkey and mtDNA comparisons among four closely related mammalian species-pairs.</title>
        <authorList>
            <person name="Xu X."/>
            <person name="Gullberg A."/>
            <person name="Arnason U."/>
        </authorList>
    </citation>
    <scope>NUCLEOTIDE SEQUENCE [GENOMIC DNA]</scope>
    <source>
        <tissue>Kidney</tissue>
    </source>
</reference>
<feature type="chain" id="PRO_0000117934" description="NADH-ubiquinone oxidoreductase chain 4">
    <location>
        <begin position="1"/>
        <end position="459"/>
    </location>
</feature>
<feature type="transmembrane region" description="Helical" evidence="3">
    <location>
        <begin position="22"/>
        <end position="42"/>
    </location>
</feature>
<feature type="transmembrane region" description="Helical" evidence="3">
    <location>
        <begin position="60"/>
        <end position="80"/>
    </location>
</feature>
<feature type="transmembrane region" description="Helical" evidence="3">
    <location>
        <begin position="95"/>
        <end position="112"/>
    </location>
</feature>
<feature type="transmembrane region" description="Helical" evidence="3">
    <location>
        <begin position="113"/>
        <end position="133"/>
    </location>
</feature>
<feature type="transmembrane region" description="Helical" evidence="3">
    <location>
        <begin position="147"/>
        <end position="167"/>
    </location>
</feature>
<feature type="transmembrane region" description="Helical" evidence="3">
    <location>
        <begin position="192"/>
        <end position="212"/>
    </location>
</feature>
<feature type="transmembrane region" description="Helical" evidence="3">
    <location>
        <begin position="224"/>
        <end position="244"/>
    </location>
</feature>
<feature type="transmembrane region" description="Helical" evidence="3">
    <location>
        <begin position="256"/>
        <end position="276"/>
    </location>
</feature>
<feature type="transmembrane region" description="Helical" evidence="3">
    <location>
        <begin position="284"/>
        <end position="303"/>
    </location>
</feature>
<feature type="transmembrane region" description="Helical" evidence="3">
    <location>
        <begin position="308"/>
        <end position="330"/>
    </location>
</feature>
<feature type="transmembrane region" description="Helical" evidence="3">
    <location>
        <begin position="351"/>
        <end position="371"/>
    </location>
</feature>
<feature type="transmembrane region" description="Helical" evidence="3">
    <location>
        <begin position="391"/>
        <end position="411"/>
    </location>
</feature>
<protein>
    <recommendedName>
        <fullName>NADH-ubiquinone oxidoreductase chain 4</fullName>
        <ecNumber evidence="1">7.1.1.2</ecNumber>
    </recommendedName>
    <alternativeName>
        <fullName>NADH dehydrogenase subunit 4</fullName>
    </alternativeName>
</protein>